<organism>
    <name type="scientific">Mycobacterium tuberculosis (strain CDC 1551 / Oshkosh)</name>
    <dbReference type="NCBI Taxonomy" id="83331"/>
    <lineage>
        <taxon>Bacteria</taxon>
        <taxon>Bacillati</taxon>
        <taxon>Actinomycetota</taxon>
        <taxon>Actinomycetes</taxon>
        <taxon>Mycobacteriales</taxon>
        <taxon>Mycobacteriaceae</taxon>
        <taxon>Mycobacterium</taxon>
        <taxon>Mycobacterium tuberculosis complex</taxon>
    </lineage>
</organism>
<name>WHB5B_MYCTO</name>
<keyword id="KW-0004">4Fe-4S</keyword>
<keyword id="KW-0963">Cytoplasm</keyword>
<keyword id="KW-1015">Disulfide bond</keyword>
<keyword id="KW-0238">DNA-binding</keyword>
<keyword id="KW-0408">Iron</keyword>
<keyword id="KW-0411">Iron-sulfur</keyword>
<keyword id="KW-0479">Metal-binding</keyword>
<keyword id="KW-1185">Reference proteome</keyword>
<keyword id="KW-0804">Transcription</keyword>
<keyword id="KW-0805">Transcription regulation</keyword>
<gene>
    <name type="primary">whiB5</name>
    <name type="ordered locus">MT0025.1</name>
</gene>
<protein>
    <recommendedName>
        <fullName>Transcriptional regulator WhiB5</fullName>
    </recommendedName>
</protein>
<comment type="function">
    <text evidence="1">Acts as a transcriptional regulator. Probably redox-responsive. The apo- but not holo-form probably binds DNA (By similarity).</text>
</comment>
<comment type="cofactor">
    <cofactor evidence="1">
        <name>[4Fe-4S] cluster</name>
        <dbReference type="ChEBI" id="CHEBI:49883"/>
    </cofactor>
    <text evidence="1">Binds 1 [4Fe-4S] cluster per subunit. Following nitrosylation of the [4Fe-4S] cluster binds 1 [4Fe-8(NO)] cluster per subunit.</text>
</comment>
<comment type="subcellular location">
    <subcellularLocation>
        <location evidence="1">Cytoplasm</location>
    </subcellularLocation>
</comment>
<comment type="induction">
    <text evidence="2 3">Essentially constitutive during exponential and early stationary phases, decreases in late stationary phase. 3-fold induced by starvation, 3-fold by cumene hydroperoxide and 5-fold by diamide (oxidzing agents), 15-fold induced by SDS, 200-fold by heat shock. Repressed by SDS and diamide. Not induced by hypoxia, NO, cAMP or in mouse infection, slightly repressed in macrophage infection.</text>
</comment>
<comment type="PTM">
    <text evidence="1">The Fe-S cluster can be nitrosylated by nitric oxide (NO).</text>
</comment>
<comment type="PTM">
    <text evidence="1">Upon Fe-S cluster removal intramolecular disulfide bonds are formed.</text>
</comment>
<comment type="similarity">
    <text evidence="4">Belongs to the WhiB family.</text>
</comment>
<feature type="chain" id="PRO_0000420385" description="Transcriptional regulator WhiB5">
    <location>
        <begin position="1"/>
        <end position="139"/>
    </location>
</feature>
<feature type="domain" description="4Fe-4S Wbl-type">
    <location>
        <begin position="4"/>
        <end position="77"/>
    </location>
</feature>
<feature type="binding site" evidence="1">
    <location>
        <position position="5"/>
    </location>
    <ligand>
        <name>[4Fe-4S] cluster</name>
        <dbReference type="ChEBI" id="CHEBI:49883"/>
    </ligand>
</feature>
<feature type="binding site" evidence="1">
    <location>
        <position position="41"/>
    </location>
    <ligand>
        <name>[4Fe-4S] cluster</name>
        <dbReference type="ChEBI" id="CHEBI:49883"/>
    </ligand>
</feature>
<feature type="binding site" evidence="1">
    <location>
        <position position="45"/>
    </location>
    <ligand>
        <name>[4Fe-4S] cluster</name>
        <dbReference type="ChEBI" id="CHEBI:49883"/>
    </ligand>
</feature>
<feature type="binding site" evidence="1">
    <location>
        <position position="53"/>
    </location>
    <ligand>
        <name>[4Fe-4S] cluster</name>
        <dbReference type="ChEBI" id="CHEBI:49883"/>
    </ligand>
</feature>
<dbReference type="EMBL" id="AE000516">
    <property type="status" value="NOT_ANNOTATED_CDS"/>
    <property type="molecule type" value="Genomic_DNA"/>
</dbReference>
<dbReference type="RefSeq" id="WP_003400388.1">
    <property type="nucleotide sequence ID" value="NZ_KK341227.1"/>
</dbReference>
<dbReference type="SMR" id="P0DKR7"/>
<dbReference type="GeneID" id="45423982"/>
<dbReference type="PATRIC" id="fig|83331.31.peg.26"/>
<dbReference type="Proteomes" id="UP000001020">
    <property type="component" value="Chromosome"/>
</dbReference>
<dbReference type="GO" id="GO:0005737">
    <property type="term" value="C:cytoplasm"/>
    <property type="evidence" value="ECO:0007669"/>
    <property type="project" value="UniProtKB-SubCell"/>
</dbReference>
<dbReference type="GO" id="GO:0051539">
    <property type="term" value="F:4 iron, 4 sulfur cluster binding"/>
    <property type="evidence" value="ECO:0007669"/>
    <property type="project" value="UniProtKB-UniRule"/>
</dbReference>
<dbReference type="GO" id="GO:0035731">
    <property type="term" value="F:dinitrosyl-iron complex binding"/>
    <property type="evidence" value="ECO:0007669"/>
    <property type="project" value="UniProtKB-UniRule"/>
</dbReference>
<dbReference type="GO" id="GO:0003677">
    <property type="term" value="F:DNA binding"/>
    <property type="evidence" value="ECO:0007669"/>
    <property type="project" value="UniProtKB-UniRule"/>
</dbReference>
<dbReference type="GO" id="GO:0046872">
    <property type="term" value="F:metal ion binding"/>
    <property type="evidence" value="ECO:0007669"/>
    <property type="project" value="UniProtKB-KW"/>
</dbReference>
<dbReference type="GO" id="GO:0006355">
    <property type="term" value="P:regulation of DNA-templated transcription"/>
    <property type="evidence" value="ECO:0007669"/>
    <property type="project" value="UniProtKB-UniRule"/>
</dbReference>
<dbReference type="HAMAP" id="MF_01479">
    <property type="entry name" value="WhiB"/>
    <property type="match status" value="1"/>
</dbReference>
<dbReference type="InterPro" id="IPR034768">
    <property type="entry name" value="4FE4S_WBL"/>
</dbReference>
<dbReference type="InterPro" id="IPR003482">
    <property type="entry name" value="Whib"/>
</dbReference>
<dbReference type="Pfam" id="PF02467">
    <property type="entry name" value="Whib"/>
    <property type="match status" value="1"/>
</dbReference>
<dbReference type="PROSITE" id="PS51674">
    <property type="entry name" value="4FE4S_WBL"/>
    <property type="match status" value="1"/>
</dbReference>
<proteinExistence type="evidence at transcript level"/>
<evidence type="ECO:0000250" key="1"/>
<evidence type="ECO:0000269" key="2">
    <source>
    </source>
</evidence>
<evidence type="ECO:0000269" key="3">
    <source>
    </source>
</evidence>
<evidence type="ECO:0000305" key="4"/>
<accession>P0DKR7</accession>
<sequence length="139" mass="15178">MAHPCATDPELWFGYPDDDGSDGAAKARAYERSATQARIQCLRRCPLLQQRRCAQHAVEHRVEYGVWAGIKLPGGQYRKREQLAAAHDVLRRIAGGEINSRQLPDNAALLARNEGLEVTPVPGVVVHLPIAQVGPQPAA</sequence>
<reference key="1">
    <citation type="journal article" date="2002" name="J. Bacteriol.">
        <title>Whole-genome comparison of Mycobacterium tuberculosis clinical and laboratory strains.</title>
        <authorList>
            <person name="Fleischmann R.D."/>
            <person name="Alland D."/>
            <person name="Eisen J.A."/>
            <person name="Carpenter L."/>
            <person name="White O."/>
            <person name="Peterson J.D."/>
            <person name="DeBoy R.T."/>
            <person name="Dodson R.J."/>
            <person name="Gwinn M.L."/>
            <person name="Haft D.H."/>
            <person name="Hickey E.K."/>
            <person name="Kolonay J.F."/>
            <person name="Nelson W.C."/>
            <person name="Umayam L.A."/>
            <person name="Ermolaeva M.D."/>
            <person name="Salzberg S.L."/>
            <person name="Delcher A."/>
            <person name="Utterback T.R."/>
            <person name="Weidman J.F."/>
            <person name="Khouri H.M."/>
            <person name="Gill J."/>
            <person name="Mikula A."/>
            <person name="Bishai W."/>
            <person name="Jacobs W.R. Jr."/>
            <person name="Venter J.C."/>
            <person name="Fraser C.M."/>
        </authorList>
    </citation>
    <scope>NUCLEOTIDE SEQUENCE [LARGE SCALE GENOMIC DNA]</scope>
    <source>
        <strain>CDC 1551 / Oshkosh</strain>
    </source>
</reference>
<reference key="2">
    <citation type="journal article" date="2006" name="Antimicrob. Agents Chemother.">
        <title>Differential gene expression in response to exposure to antimycobacterial agents and other stress conditions among seven Mycobacterium tuberculosis whiB-like genes.</title>
        <authorList>
            <person name="Geiman D.E."/>
            <person name="Raghunand T.R."/>
            <person name="Agarwal N."/>
            <person name="Bishai W.R."/>
        </authorList>
    </citation>
    <scope>INDUCTION</scope>
    <source>
        <strain>CDC 1551 / Oshkosh</strain>
    </source>
</reference>
<reference key="3">
    <citation type="journal article" date="2012" name="PLoS ONE">
        <title>Gene expression of Mycobacterium tuberculosis putative transcription factors whiB1-7 in redox environments.</title>
        <authorList>
            <person name="Larsson C."/>
            <person name="Luna B."/>
            <person name="Ammerman N.C."/>
            <person name="Maiga M."/>
            <person name="Agarwal N."/>
            <person name="Bishai W.R."/>
        </authorList>
    </citation>
    <scope>INDUCTION</scope>
    <source>
        <strain>CDC 1551 / Oshkosh</strain>
    </source>
</reference>